<keyword id="KW-0496">Mitochondrion</keyword>
<keyword id="KW-1185">Reference proteome</keyword>
<keyword id="KW-0687">Ribonucleoprotein</keyword>
<keyword id="KW-0689">Ribosomal protein</keyword>
<keyword id="KW-0809">Transit peptide</keyword>
<comment type="function">
    <text evidence="2">May form part of 2 intersubunit bridges in the assembled ribosome. Upon binding to MALSU1, intersubunit bridge formation is blocked, preventing ribosome formation and repressing translation.</text>
</comment>
<comment type="subunit">
    <text evidence="2">Component of the mitochondrial ribosome large subunit (39S) which comprises a 16S rRNA and about 50 distinct proteins. Interacts with MALSU1.</text>
</comment>
<comment type="subcellular location">
    <subcellularLocation>
        <location evidence="2">Mitochondrion</location>
    </subcellularLocation>
</comment>
<comment type="similarity">
    <text evidence="3">Belongs to the universal ribosomal protein uL14 family.</text>
</comment>
<proteinExistence type="evidence at protein level"/>
<dbReference type="EMBL" id="AK003500">
    <property type="protein sequence ID" value="BAB22824.1"/>
    <property type="molecule type" value="mRNA"/>
</dbReference>
<dbReference type="EMBL" id="AK050273">
    <property type="protein sequence ID" value="BAC34158.1"/>
    <property type="molecule type" value="mRNA"/>
</dbReference>
<dbReference type="EMBL" id="AK144153">
    <property type="protein sequence ID" value="BAE25734.1"/>
    <property type="molecule type" value="mRNA"/>
</dbReference>
<dbReference type="EMBL" id="BC027021">
    <property type="protein sequence ID" value="AAH27021.1"/>
    <property type="molecule type" value="mRNA"/>
</dbReference>
<dbReference type="CCDS" id="CCDS28815.1"/>
<dbReference type="RefSeq" id="NP_081008.1">
    <property type="nucleotide sequence ID" value="NM_026732.3"/>
</dbReference>
<dbReference type="RefSeq" id="XP_006524906.1">
    <property type="nucleotide sequence ID" value="XM_006524843.4"/>
</dbReference>
<dbReference type="RefSeq" id="XP_006524907.1">
    <property type="nucleotide sequence ID" value="XM_006524844.5"/>
</dbReference>
<dbReference type="SMR" id="Q9D1I6"/>
<dbReference type="BioGRID" id="212863">
    <property type="interactions" value="34"/>
</dbReference>
<dbReference type="ComplexPortal" id="CPX-5302">
    <property type="entry name" value="39S mitochondrial large ribosomal subunit"/>
</dbReference>
<dbReference type="FunCoup" id="Q9D1I6">
    <property type="interactions" value="635"/>
</dbReference>
<dbReference type="STRING" id="10090.ENSMUSP00000024734"/>
<dbReference type="PhosphoSitePlus" id="Q9D1I6"/>
<dbReference type="SwissPalm" id="Q9D1I6"/>
<dbReference type="PaxDb" id="10090-ENSMUSP00000024734"/>
<dbReference type="PeptideAtlas" id="Q9D1I6"/>
<dbReference type="ProteomicsDB" id="260976"/>
<dbReference type="Pumba" id="Q9D1I6"/>
<dbReference type="Antibodypedia" id="49263">
    <property type="antibodies" value="117 antibodies from 22 providers"/>
</dbReference>
<dbReference type="DNASU" id="68463"/>
<dbReference type="Ensembl" id="ENSMUST00000024734.8">
    <property type="protein sequence ID" value="ENSMUSP00000024734.8"/>
    <property type="gene ID" value="ENSMUSG00000023939.8"/>
</dbReference>
<dbReference type="GeneID" id="68463"/>
<dbReference type="KEGG" id="mmu:68463"/>
<dbReference type="UCSC" id="uc008crj.1">
    <property type="organism name" value="mouse"/>
</dbReference>
<dbReference type="AGR" id="MGI:1333864"/>
<dbReference type="CTD" id="64928"/>
<dbReference type="MGI" id="MGI:1333864">
    <property type="gene designation" value="Mrpl14"/>
</dbReference>
<dbReference type="VEuPathDB" id="HostDB:ENSMUSG00000023939"/>
<dbReference type="eggNOG" id="KOG3441">
    <property type="taxonomic scope" value="Eukaryota"/>
</dbReference>
<dbReference type="GeneTree" id="ENSGT00390000001121"/>
<dbReference type="HOGENOM" id="CLU_128925_1_0_1"/>
<dbReference type="InParanoid" id="Q9D1I6"/>
<dbReference type="OMA" id="RCIHVYT"/>
<dbReference type="OrthoDB" id="274765at2759"/>
<dbReference type="PhylomeDB" id="Q9D1I6"/>
<dbReference type="TreeFam" id="TF324586"/>
<dbReference type="Reactome" id="R-MMU-5389840">
    <property type="pathway name" value="Mitochondrial translation elongation"/>
</dbReference>
<dbReference type="Reactome" id="R-MMU-5419276">
    <property type="pathway name" value="Mitochondrial translation termination"/>
</dbReference>
<dbReference type="BioGRID-ORCS" id="68463">
    <property type="hits" value="22 hits in 80 CRISPR screens"/>
</dbReference>
<dbReference type="ChiTaRS" id="Mrpl14">
    <property type="organism name" value="mouse"/>
</dbReference>
<dbReference type="PRO" id="PR:Q9D1I6"/>
<dbReference type="Proteomes" id="UP000000589">
    <property type="component" value="Chromosome 17"/>
</dbReference>
<dbReference type="RNAct" id="Q9D1I6">
    <property type="molecule type" value="protein"/>
</dbReference>
<dbReference type="Bgee" id="ENSMUSG00000023939">
    <property type="expression patterns" value="Expressed in yolk sac and 210 other cell types or tissues"/>
</dbReference>
<dbReference type="GO" id="GO:0005743">
    <property type="term" value="C:mitochondrial inner membrane"/>
    <property type="evidence" value="ECO:0000303"/>
    <property type="project" value="ComplexPortal"/>
</dbReference>
<dbReference type="GO" id="GO:0005762">
    <property type="term" value="C:mitochondrial large ribosomal subunit"/>
    <property type="evidence" value="ECO:0000250"/>
    <property type="project" value="UniProtKB"/>
</dbReference>
<dbReference type="GO" id="GO:0005739">
    <property type="term" value="C:mitochondrion"/>
    <property type="evidence" value="ECO:0007005"/>
    <property type="project" value="MGI"/>
</dbReference>
<dbReference type="GO" id="GO:0003735">
    <property type="term" value="F:structural constituent of ribosome"/>
    <property type="evidence" value="ECO:0007669"/>
    <property type="project" value="InterPro"/>
</dbReference>
<dbReference type="GO" id="GO:0032543">
    <property type="term" value="P:mitochondrial translation"/>
    <property type="evidence" value="ECO:0000303"/>
    <property type="project" value="ComplexPortal"/>
</dbReference>
<dbReference type="CDD" id="cd00337">
    <property type="entry name" value="Ribosomal_uL14"/>
    <property type="match status" value="1"/>
</dbReference>
<dbReference type="FunFam" id="2.40.150.20:FF:000004">
    <property type="entry name" value="39S ribosomal protein L14, mitochondrial"/>
    <property type="match status" value="1"/>
</dbReference>
<dbReference type="Gene3D" id="2.40.150.20">
    <property type="entry name" value="Ribosomal protein L14"/>
    <property type="match status" value="1"/>
</dbReference>
<dbReference type="HAMAP" id="MF_01367">
    <property type="entry name" value="Ribosomal_uL14"/>
    <property type="match status" value="1"/>
</dbReference>
<dbReference type="InterPro" id="IPR000218">
    <property type="entry name" value="Ribosomal_uL14"/>
</dbReference>
<dbReference type="InterPro" id="IPR036853">
    <property type="entry name" value="Ribosomal_uL14_sf"/>
</dbReference>
<dbReference type="PANTHER" id="PTHR21037">
    <property type="entry name" value="39S RIBOSOMAL PROTEIN L14, MITOCHONDRIAL"/>
    <property type="match status" value="1"/>
</dbReference>
<dbReference type="PANTHER" id="PTHR21037:SF3">
    <property type="entry name" value="LARGE RIBOSOMAL SUBUNIT PROTEIN UL14M"/>
    <property type="match status" value="1"/>
</dbReference>
<dbReference type="Pfam" id="PF00238">
    <property type="entry name" value="Ribosomal_L14"/>
    <property type="match status" value="1"/>
</dbReference>
<dbReference type="SMART" id="SM01374">
    <property type="entry name" value="Ribosomal_L14"/>
    <property type="match status" value="1"/>
</dbReference>
<dbReference type="SUPFAM" id="SSF50193">
    <property type="entry name" value="Ribosomal protein L14"/>
    <property type="match status" value="1"/>
</dbReference>
<sequence length="145" mass="15874">MAALTGLWGSFAHVSRAFSQRCFSTSGSLSAVQKMTRVRVVDNSALGSTPYHRPPRCIHVYNKSGVGKVGDQILLAIRGQKKKALIVGHRMPGSRMTPKFDSNNVVLIEDNGNPVGTRIKIPIPTSLRRREGEYSKVLAIAQNFV</sequence>
<feature type="transit peptide" description="Mitochondrion" evidence="1">
    <location>
        <begin position="1"/>
        <end position="30"/>
    </location>
</feature>
<feature type="chain" id="PRO_0000261135" description="Large ribosomal subunit protein uL14m">
    <location>
        <begin position="31"/>
        <end position="145"/>
    </location>
</feature>
<feature type="sequence conflict" description="In Ref. 1; BAE25734." evidence="3" ref="1">
    <original>VQK</original>
    <variation>IQ</variation>
    <location>
        <begin position="32"/>
        <end position="34"/>
    </location>
</feature>
<feature type="sequence conflict" description="In Ref. 1; BAE25734." evidence="3" ref="1">
    <original>N</original>
    <variation>S</variation>
    <location>
        <position position="104"/>
    </location>
</feature>
<protein>
    <recommendedName>
        <fullName evidence="3">Large ribosomal subunit protein uL14m</fullName>
    </recommendedName>
    <alternativeName>
        <fullName>39S ribosomal protein L14, mitochondrial</fullName>
        <shortName>L14mt</shortName>
        <shortName>MRP-L14</shortName>
    </alternativeName>
</protein>
<accession>Q9D1I6</accession>
<accession>Q3UNL3</accession>
<organism>
    <name type="scientific">Mus musculus</name>
    <name type="common">Mouse</name>
    <dbReference type="NCBI Taxonomy" id="10090"/>
    <lineage>
        <taxon>Eukaryota</taxon>
        <taxon>Metazoa</taxon>
        <taxon>Chordata</taxon>
        <taxon>Craniata</taxon>
        <taxon>Vertebrata</taxon>
        <taxon>Euteleostomi</taxon>
        <taxon>Mammalia</taxon>
        <taxon>Eutheria</taxon>
        <taxon>Euarchontoglires</taxon>
        <taxon>Glires</taxon>
        <taxon>Rodentia</taxon>
        <taxon>Myomorpha</taxon>
        <taxon>Muroidea</taxon>
        <taxon>Muridae</taxon>
        <taxon>Murinae</taxon>
        <taxon>Mus</taxon>
        <taxon>Mus</taxon>
    </lineage>
</organism>
<gene>
    <name type="primary">Mrpl14</name>
</gene>
<evidence type="ECO:0000250" key="1"/>
<evidence type="ECO:0000250" key="2">
    <source>
        <dbReference type="UniProtKB" id="Q6P1L8"/>
    </source>
</evidence>
<evidence type="ECO:0000305" key="3"/>
<name>RM14_MOUSE</name>
<reference key="1">
    <citation type="journal article" date="2005" name="Science">
        <title>The transcriptional landscape of the mammalian genome.</title>
        <authorList>
            <person name="Carninci P."/>
            <person name="Kasukawa T."/>
            <person name="Katayama S."/>
            <person name="Gough J."/>
            <person name="Frith M.C."/>
            <person name="Maeda N."/>
            <person name="Oyama R."/>
            <person name="Ravasi T."/>
            <person name="Lenhard B."/>
            <person name="Wells C."/>
            <person name="Kodzius R."/>
            <person name="Shimokawa K."/>
            <person name="Bajic V.B."/>
            <person name="Brenner S.E."/>
            <person name="Batalov S."/>
            <person name="Forrest A.R."/>
            <person name="Zavolan M."/>
            <person name="Davis M.J."/>
            <person name="Wilming L.G."/>
            <person name="Aidinis V."/>
            <person name="Allen J.E."/>
            <person name="Ambesi-Impiombato A."/>
            <person name="Apweiler R."/>
            <person name="Aturaliya R.N."/>
            <person name="Bailey T.L."/>
            <person name="Bansal M."/>
            <person name="Baxter L."/>
            <person name="Beisel K.W."/>
            <person name="Bersano T."/>
            <person name="Bono H."/>
            <person name="Chalk A.M."/>
            <person name="Chiu K.P."/>
            <person name="Choudhary V."/>
            <person name="Christoffels A."/>
            <person name="Clutterbuck D.R."/>
            <person name="Crowe M.L."/>
            <person name="Dalla E."/>
            <person name="Dalrymple B.P."/>
            <person name="de Bono B."/>
            <person name="Della Gatta G."/>
            <person name="di Bernardo D."/>
            <person name="Down T."/>
            <person name="Engstrom P."/>
            <person name="Fagiolini M."/>
            <person name="Faulkner G."/>
            <person name="Fletcher C.F."/>
            <person name="Fukushima T."/>
            <person name="Furuno M."/>
            <person name="Futaki S."/>
            <person name="Gariboldi M."/>
            <person name="Georgii-Hemming P."/>
            <person name="Gingeras T.R."/>
            <person name="Gojobori T."/>
            <person name="Green R.E."/>
            <person name="Gustincich S."/>
            <person name="Harbers M."/>
            <person name="Hayashi Y."/>
            <person name="Hensch T.K."/>
            <person name="Hirokawa N."/>
            <person name="Hill D."/>
            <person name="Huminiecki L."/>
            <person name="Iacono M."/>
            <person name="Ikeo K."/>
            <person name="Iwama A."/>
            <person name="Ishikawa T."/>
            <person name="Jakt M."/>
            <person name="Kanapin A."/>
            <person name="Katoh M."/>
            <person name="Kawasawa Y."/>
            <person name="Kelso J."/>
            <person name="Kitamura H."/>
            <person name="Kitano H."/>
            <person name="Kollias G."/>
            <person name="Krishnan S.P."/>
            <person name="Kruger A."/>
            <person name="Kummerfeld S.K."/>
            <person name="Kurochkin I.V."/>
            <person name="Lareau L.F."/>
            <person name="Lazarevic D."/>
            <person name="Lipovich L."/>
            <person name="Liu J."/>
            <person name="Liuni S."/>
            <person name="McWilliam S."/>
            <person name="Madan Babu M."/>
            <person name="Madera M."/>
            <person name="Marchionni L."/>
            <person name="Matsuda H."/>
            <person name="Matsuzawa S."/>
            <person name="Miki H."/>
            <person name="Mignone F."/>
            <person name="Miyake S."/>
            <person name="Morris K."/>
            <person name="Mottagui-Tabar S."/>
            <person name="Mulder N."/>
            <person name="Nakano N."/>
            <person name="Nakauchi H."/>
            <person name="Ng P."/>
            <person name="Nilsson R."/>
            <person name="Nishiguchi S."/>
            <person name="Nishikawa S."/>
            <person name="Nori F."/>
            <person name="Ohara O."/>
            <person name="Okazaki Y."/>
            <person name="Orlando V."/>
            <person name="Pang K.C."/>
            <person name="Pavan W.J."/>
            <person name="Pavesi G."/>
            <person name="Pesole G."/>
            <person name="Petrovsky N."/>
            <person name="Piazza S."/>
            <person name="Reed J."/>
            <person name="Reid J.F."/>
            <person name="Ring B.Z."/>
            <person name="Ringwald M."/>
            <person name="Rost B."/>
            <person name="Ruan Y."/>
            <person name="Salzberg S.L."/>
            <person name="Sandelin A."/>
            <person name="Schneider C."/>
            <person name="Schoenbach C."/>
            <person name="Sekiguchi K."/>
            <person name="Semple C.A."/>
            <person name="Seno S."/>
            <person name="Sessa L."/>
            <person name="Sheng Y."/>
            <person name="Shibata Y."/>
            <person name="Shimada H."/>
            <person name="Shimada K."/>
            <person name="Silva D."/>
            <person name="Sinclair B."/>
            <person name="Sperling S."/>
            <person name="Stupka E."/>
            <person name="Sugiura K."/>
            <person name="Sultana R."/>
            <person name="Takenaka Y."/>
            <person name="Taki K."/>
            <person name="Tammoja K."/>
            <person name="Tan S.L."/>
            <person name="Tang S."/>
            <person name="Taylor M.S."/>
            <person name="Tegner J."/>
            <person name="Teichmann S.A."/>
            <person name="Ueda H.R."/>
            <person name="van Nimwegen E."/>
            <person name="Verardo R."/>
            <person name="Wei C.L."/>
            <person name="Yagi K."/>
            <person name="Yamanishi H."/>
            <person name="Zabarovsky E."/>
            <person name="Zhu S."/>
            <person name="Zimmer A."/>
            <person name="Hide W."/>
            <person name="Bult C."/>
            <person name="Grimmond S.M."/>
            <person name="Teasdale R.D."/>
            <person name="Liu E.T."/>
            <person name="Brusic V."/>
            <person name="Quackenbush J."/>
            <person name="Wahlestedt C."/>
            <person name="Mattick J.S."/>
            <person name="Hume D.A."/>
            <person name="Kai C."/>
            <person name="Sasaki D."/>
            <person name="Tomaru Y."/>
            <person name="Fukuda S."/>
            <person name="Kanamori-Katayama M."/>
            <person name="Suzuki M."/>
            <person name="Aoki J."/>
            <person name="Arakawa T."/>
            <person name="Iida J."/>
            <person name="Imamura K."/>
            <person name="Itoh M."/>
            <person name="Kato T."/>
            <person name="Kawaji H."/>
            <person name="Kawagashira N."/>
            <person name="Kawashima T."/>
            <person name="Kojima M."/>
            <person name="Kondo S."/>
            <person name="Konno H."/>
            <person name="Nakano K."/>
            <person name="Ninomiya N."/>
            <person name="Nishio T."/>
            <person name="Okada M."/>
            <person name="Plessy C."/>
            <person name="Shibata K."/>
            <person name="Shiraki T."/>
            <person name="Suzuki S."/>
            <person name="Tagami M."/>
            <person name="Waki K."/>
            <person name="Watahiki A."/>
            <person name="Okamura-Oho Y."/>
            <person name="Suzuki H."/>
            <person name="Kawai J."/>
            <person name="Hayashizaki Y."/>
        </authorList>
    </citation>
    <scope>NUCLEOTIDE SEQUENCE [LARGE SCALE MRNA]</scope>
    <source>
        <strain>C57BL/6J</strain>
        <tissue>Liver</tissue>
        <tissue>Submandibular gland</tissue>
    </source>
</reference>
<reference key="2">
    <citation type="journal article" date="2004" name="Genome Res.">
        <title>The status, quality, and expansion of the NIH full-length cDNA project: the Mammalian Gene Collection (MGC).</title>
        <authorList>
            <consortium name="The MGC Project Team"/>
        </authorList>
    </citation>
    <scope>NUCLEOTIDE SEQUENCE [LARGE SCALE MRNA]</scope>
    <source>
        <strain>FVB/N-3</strain>
        <tissue>Mammary tumor</tissue>
    </source>
</reference>
<reference key="3">
    <citation type="journal article" date="2010" name="Cell">
        <title>A tissue-specific atlas of mouse protein phosphorylation and expression.</title>
        <authorList>
            <person name="Huttlin E.L."/>
            <person name="Jedrychowski M.P."/>
            <person name="Elias J.E."/>
            <person name="Goswami T."/>
            <person name="Rad R."/>
            <person name="Beausoleil S.A."/>
            <person name="Villen J."/>
            <person name="Haas W."/>
            <person name="Sowa M.E."/>
            <person name="Gygi S.P."/>
        </authorList>
    </citation>
    <scope>IDENTIFICATION BY MASS SPECTROMETRY [LARGE SCALE ANALYSIS]</scope>
    <source>
        <tissue>Brain</tissue>
        <tissue>Heart</tissue>
        <tissue>Kidney</tissue>
        <tissue>Liver</tissue>
        <tissue>Pancreas</tissue>
        <tissue>Testis</tissue>
    </source>
</reference>